<organism>
    <name type="scientific">Rickettsia bellii (strain OSU 85-389)</name>
    <dbReference type="NCBI Taxonomy" id="391896"/>
    <lineage>
        <taxon>Bacteria</taxon>
        <taxon>Pseudomonadati</taxon>
        <taxon>Pseudomonadota</taxon>
        <taxon>Alphaproteobacteria</taxon>
        <taxon>Rickettsiales</taxon>
        <taxon>Rickettsiaceae</taxon>
        <taxon>Rickettsieae</taxon>
        <taxon>Rickettsia</taxon>
        <taxon>belli group</taxon>
    </lineage>
</organism>
<accession>A8GXR2</accession>
<proteinExistence type="inferred from homology"/>
<feature type="chain" id="PRO_1000056286" description="Ubiquinone/menaquinone biosynthesis C-methyltransferase UbiE">
    <location>
        <begin position="1"/>
        <end position="248"/>
    </location>
</feature>
<feature type="binding site" evidence="1">
    <location>
        <position position="68"/>
    </location>
    <ligand>
        <name>S-adenosyl-L-methionine</name>
        <dbReference type="ChEBI" id="CHEBI:59789"/>
    </ligand>
</feature>
<feature type="binding site" evidence="1">
    <location>
        <position position="92"/>
    </location>
    <ligand>
        <name>S-adenosyl-L-methionine</name>
        <dbReference type="ChEBI" id="CHEBI:59789"/>
    </ligand>
</feature>
<reference key="1">
    <citation type="submission" date="2007-09" db="EMBL/GenBank/DDBJ databases">
        <title>Complete genome sequencing of Rickettsia bellii.</title>
        <authorList>
            <person name="Madan A."/>
            <person name="Lee H."/>
            <person name="Madan A."/>
            <person name="Yoon J.-G."/>
            <person name="Ryu G.-Y."/>
            <person name="Dasch G."/>
            <person name="Ereemeva M."/>
        </authorList>
    </citation>
    <scope>NUCLEOTIDE SEQUENCE [LARGE SCALE GENOMIC DNA]</scope>
    <source>
        <strain>OSU 85-389</strain>
    </source>
</reference>
<dbReference type="EC" id="2.1.1.163" evidence="1"/>
<dbReference type="EC" id="2.1.1.201" evidence="1"/>
<dbReference type="EMBL" id="CP000849">
    <property type="protein sequence ID" value="ABV79662.1"/>
    <property type="molecule type" value="Genomic_DNA"/>
</dbReference>
<dbReference type="RefSeq" id="WP_012152177.1">
    <property type="nucleotide sequence ID" value="NC_009883.1"/>
</dbReference>
<dbReference type="SMR" id="A8GXR2"/>
<dbReference type="KEGG" id="rbo:A1I_06730"/>
<dbReference type="HOGENOM" id="CLU_037990_0_1_5"/>
<dbReference type="UniPathway" id="UPA00079">
    <property type="reaction ID" value="UER00169"/>
</dbReference>
<dbReference type="UniPathway" id="UPA00232"/>
<dbReference type="GO" id="GO:0008425">
    <property type="term" value="F:2-methoxy-6-polyprenyl-1,4-benzoquinol methyltransferase activity"/>
    <property type="evidence" value="ECO:0007669"/>
    <property type="project" value="UniProtKB-UniRule"/>
</dbReference>
<dbReference type="GO" id="GO:0043770">
    <property type="term" value="F:demethylmenaquinone methyltransferase activity"/>
    <property type="evidence" value="ECO:0007669"/>
    <property type="project" value="UniProtKB-UniRule"/>
</dbReference>
<dbReference type="GO" id="GO:0009060">
    <property type="term" value="P:aerobic respiration"/>
    <property type="evidence" value="ECO:0007669"/>
    <property type="project" value="UniProtKB-UniRule"/>
</dbReference>
<dbReference type="GO" id="GO:0009234">
    <property type="term" value="P:menaquinone biosynthetic process"/>
    <property type="evidence" value="ECO:0007669"/>
    <property type="project" value="UniProtKB-UniRule"/>
</dbReference>
<dbReference type="GO" id="GO:0032259">
    <property type="term" value="P:methylation"/>
    <property type="evidence" value="ECO:0007669"/>
    <property type="project" value="UniProtKB-KW"/>
</dbReference>
<dbReference type="CDD" id="cd02440">
    <property type="entry name" value="AdoMet_MTases"/>
    <property type="match status" value="1"/>
</dbReference>
<dbReference type="FunFam" id="3.40.50.150:FF:000250">
    <property type="entry name" value="Ubiquinone/menaquinone biosynthesis C-methyltransferase UbiE"/>
    <property type="match status" value="1"/>
</dbReference>
<dbReference type="Gene3D" id="3.40.50.150">
    <property type="entry name" value="Vaccinia Virus protein VP39"/>
    <property type="match status" value="1"/>
</dbReference>
<dbReference type="HAMAP" id="MF_01813">
    <property type="entry name" value="MenG_UbiE_methyltr"/>
    <property type="match status" value="1"/>
</dbReference>
<dbReference type="InterPro" id="IPR029063">
    <property type="entry name" value="SAM-dependent_MTases_sf"/>
</dbReference>
<dbReference type="InterPro" id="IPR004033">
    <property type="entry name" value="UbiE/COQ5_MeTrFase"/>
</dbReference>
<dbReference type="InterPro" id="IPR023576">
    <property type="entry name" value="UbiE/COQ5_MeTrFase_CS"/>
</dbReference>
<dbReference type="NCBIfam" id="TIGR01934">
    <property type="entry name" value="MenG_MenH_UbiE"/>
    <property type="match status" value="1"/>
</dbReference>
<dbReference type="NCBIfam" id="NF001242">
    <property type="entry name" value="PRK00216.1-3"/>
    <property type="match status" value="1"/>
</dbReference>
<dbReference type="NCBIfam" id="NF001244">
    <property type="entry name" value="PRK00216.1-5"/>
    <property type="match status" value="1"/>
</dbReference>
<dbReference type="PANTHER" id="PTHR43591:SF24">
    <property type="entry name" value="2-METHOXY-6-POLYPRENYL-1,4-BENZOQUINOL METHYLASE, MITOCHONDRIAL"/>
    <property type="match status" value="1"/>
</dbReference>
<dbReference type="PANTHER" id="PTHR43591">
    <property type="entry name" value="METHYLTRANSFERASE"/>
    <property type="match status" value="1"/>
</dbReference>
<dbReference type="Pfam" id="PF01209">
    <property type="entry name" value="Ubie_methyltran"/>
    <property type="match status" value="1"/>
</dbReference>
<dbReference type="SUPFAM" id="SSF53335">
    <property type="entry name" value="S-adenosyl-L-methionine-dependent methyltransferases"/>
    <property type="match status" value="1"/>
</dbReference>
<dbReference type="PROSITE" id="PS51608">
    <property type="entry name" value="SAM_MT_UBIE"/>
    <property type="match status" value="1"/>
</dbReference>
<dbReference type="PROSITE" id="PS01183">
    <property type="entry name" value="UBIE_1"/>
    <property type="match status" value="1"/>
</dbReference>
<dbReference type="PROSITE" id="PS01184">
    <property type="entry name" value="UBIE_2"/>
    <property type="match status" value="1"/>
</dbReference>
<protein>
    <recommendedName>
        <fullName evidence="1">Ubiquinone/menaquinone biosynthesis C-methyltransferase UbiE</fullName>
        <ecNumber evidence="1">2.1.1.163</ecNumber>
        <ecNumber evidence="1">2.1.1.201</ecNumber>
    </recommendedName>
    <alternativeName>
        <fullName evidence="1">2-methoxy-6-polyprenyl-1,4-benzoquinol methylase</fullName>
    </alternativeName>
    <alternativeName>
        <fullName evidence="1">Demethylmenaquinone methyltransferase</fullName>
    </alternativeName>
</protein>
<comment type="function">
    <text evidence="1">Methyltransferase required for the conversion of demethylmenaquinol (DMKH2) to menaquinol (MKH2) and the conversion of 2-polyprenyl-6-methoxy-1,4-benzoquinol (DDMQH2) to 2-polyprenyl-3-methyl-6-methoxy-1,4-benzoquinol (DMQH2).</text>
</comment>
<comment type="catalytic activity">
    <reaction evidence="1">
        <text>a 2-demethylmenaquinol + S-adenosyl-L-methionine = a menaquinol + S-adenosyl-L-homocysteine + H(+)</text>
        <dbReference type="Rhea" id="RHEA:42640"/>
        <dbReference type="Rhea" id="RHEA-COMP:9539"/>
        <dbReference type="Rhea" id="RHEA-COMP:9563"/>
        <dbReference type="ChEBI" id="CHEBI:15378"/>
        <dbReference type="ChEBI" id="CHEBI:18151"/>
        <dbReference type="ChEBI" id="CHEBI:55437"/>
        <dbReference type="ChEBI" id="CHEBI:57856"/>
        <dbReference type="ChEBI" id="CHEBI:59789"/>
        <dbReference type="EC" id="2.1.1.163"/>
    </reaction>
</comment>
<comment type="catalytic activity">
    <reaction evidence="1">
        <text>a 2-methoxy-6-(all-trans-polyprenyl)benzene-1,4-diol + S-adenosyl-L-methionine = a 5-methoxy-2-methyl-3-(all-trans-polyprenyl)benzene-1,4-diol + S-adenosyl-L-homocysteine + H(+)</text>
        <dbReference type="Rhea" id="RHEA:28286"/>
        <dbReference type="Rhea" id="RHEA-COMP:10858"/>
        <dbReference type="Rhea" id="RHEA-COMP:10859"/>
        <dbReference type="ChEBI" id="CHEBI:15378"/>
        <dbReference type="ChEBI" id="CHEBI:57856"/>
        <dbReference type="ChEBI" id="CHEBI:59789"/>
        <dbReference type="ChEBI" id="CHEBI:84166"/>
        <dbReference type="ChEBI" id="CHEBI:84167"/>
        <dbReference type="EC" id="2.1.1.201"/>
    </reaction>
</comment>
<comment type="pathway">
    <text evidence="1">Quinol/quinone metabolism; menaquinone biosynthesis; menaquinol from 1,4-dihydroxy-2-naphthoate: step 2/2.</text>
</comment>
<comment type="pathway">
    <text evidence="1">Cofactor biosynthesis; ubiquinone biosynthesis.</text>
</comment>
<comment type="similarity">
    <text evidence="1">Belongs to the class I-like SAM-binding methyltransferase superfamily. MenG/UbiE family.</text>
</comment>
<keyword id="KW-0474">Menaquinone biosynthesis</keyword>
<keyword id="KW-0489">Methyltransferase</keyword>
<keyword id="KW-0949">S-adenosyl-L-methionine</keyword>
<keyword id="KW-0808">Transferase</keyword>
<keyword id="KW-0831">Ubiquinone biosynthesis</keyword>
<name>UBIE_RICB8</name>
<sequence length="248" mass="28337">MNQTNFGFKKIKANEKQSLVNSVFSNVADKYDLMNDLMSFGMHRLWKDEFIRQIPNLNSNILDVASGSGDIALKLAKKAKDRGSNISLTLSDINEEMLRQAKKKSIDLNLFQNLKFTVASAEELPFPDNSFDYYTIAFGIRNVPDINKALKEAYRVLKPMGKFICLEFSKVKESLLQDFYKFYSFNVIPKIGKIITGNKEAYDYLVESIDLFPSQDEFRIMIKEAGFEEINYKNLSGGIVAIHSAYKL</sequence>
<evidence type="ECO:0000255" key="1">
    <source>
        <dbReference type="HAMAP-Rule" id="MF_01813"/>
    </source>
</evidence>
<gene>
    <name evidence="1" type="primary">ubiE</name>
    <name type="ordered locus">A1I_06730</name>
</gene>